<keyword id="KW-0030">Aminoacyl-tRNA synthetase</keyword>
<keyword id="KW-0067">ATP-binding</keyword>
<keyword id="KW-0963">Cytoplasm</keyword>
<keyword id="KW-0436">Ligase</keyword>
<keyword id="KW-0479">Metal-binding</keyword>
<keyword id="KW-0547">Nucleotide-binding</keyword>
<keyword id="KW-0648">Protein biosynthesis</keyword>
<keyword id="KW-0862">Zinc</keyword>
<reference key="1">
    <citation type="journal article" date="2008" name="PLoS Genet.">
        <title>The genome of Borrelia recurrentis, the agent of deadly louse-borne relapsing fever, is a degraded subset of tick-borne Borrelia duttonii.</title>
        <authorList>
            <person name="Lescot M."/>
            <person name="Audic S."/>
            <person name="Robert C."/>
            <person name="Nguyen T.T."/>
            <person name="Blanc G."/>
            <person name="Cutler S.J."/>
            <person name="Wincker P."/>
            <person name="Couloux A."/>
            <person name="Claverie J.-M."/>
            <person name="Raoult D."/>
            <person name="Drancourt M."/>
        </authorList>
    </citation>
    <scope>NUCLEOTIDE SEQUENCE [LARGE SCALE GENOMIC DNA]</scope>
    <source>
        <strain>A1</strain>
    </source>
</reference>
<sequence length="1044" mass="122975">MFKKVENKVHFPQLEEKILQFWNHNKIFEKSMKQREGCEEFTFYDGPPFATGLPHFGHFVPNTIKDIIPRYQTMKGKNVKRYFGWDTHGLPVEYEVEKSLKLSGRYEIEQYGIDKFNEECRNIVLRYTKEWKKIITRLGRWVDFENNYKTMDLTFMESVWWVFKTLYNKGLIYESYYVLPYSPKLATPLSNFEVNLGEYKEIHDPSLTIKFKIKDKNEYLLAWTTTPWTLPTNLGIAVGKDIDYSKVVDQEKNEIYIIGTKRLNHYYQDENKYVIIEQFKGEHLKGIEYEPLFDYFVNQRNKGAFKIHTAEYVTTDDGTGIVHIAPFGEEDYQILKKNTQTDMITPIDAECKFTSEVKDFEGLFVKDADNKIIEKLKSMNLLFKRENYLHRYPFCYRTNSPLIYRPISSWFVNIEKIKEKLIRSNEQINWIPEHLKKGRFGKWLENARDWAISRNRFWGNPIPIWKCSKTGNKICIGSREELEKLSGQKIIDLHKDKIDKITWPSKYGGTYVRTSEVLDCWFESGSMPYASKHYPFKDKDKFQNIFPADFIAEGLDQTRGWFYTLTILGTALFEKTAFKNVIVNGLVLSSDGKKMSKSLKNYTDPIQIINTFGADALRLYLIMSPVIKADDLKYSDDGVKDVLKNIIIPIWNAYSFFITYAIIDKFTPNNYVNLYKTNILDKWIISEIESLKQILNEEIDKYNLTKSIEVLLTFIDKLNNWYIRRSRRRFWKSENDNDKIDAYETLYYTLKNLMLMLAPFIPFLTEEIYQNLKTKNEKESIHLNNYPQSIKELINIELEEKMNFTRKVITIARALRASHNIKIRKPIKTIYIITKNHKEQNTLREMTEIILEEINAKEIKIKSNEEELVTYKAKANFKELGSKLGTNMKSVALAITKLSNEDILEIINGNKHTITINNNTYDITLKDIILERHERKNLKVINEDSITIGLDTLITEELYLEGLSRELIRKVQNLRKESNFNVTDRIILYTNNDEILTKIINNFENYIKTETLAITIEINNKKALTTLELDEEISVNIGIEKCLN</sequence>
<evidence type="ECO:0000255" key="1">
    <source>
        <dbReference type="HAMAP-Rule" id="MF_02003"/>
    </source>
</evidence>
<protein>
    <recommendedName>
        <fullName evidence="1">Isoleucine--tRNA ligase</fullName>
        <ecNumber evidence="1">6.1.1.5</ecNumber>
    </recommendedName>
    <alternativeName>
        <fullName evidence="1">Isoleucyl-tRNA synthetase</fullName>
        <shortName evidence="1">IleRS</shortName>
    </alternativeName>
</protein>
<accession>B5RQH0</accession>
<name>SYI_BORRA</name>
<comment type="function">
    <text evidence="1">Catalyzes the attachment of isoleucine to tRNA(Ile). As IleRS can inadvertently accommodate and process structurally similar amino acids such as valine, to avoid such errors it has two additional distinct tRNA(Ile)-dependent editing activities. One activity is designated as 'pretransfer' editing and involves the hydrolysis of activated Val-AMP. The other activity is designated 'posttransfer' editing and involves deacylation of mischarged Val-tRNA(Ile).</text>
</comment>
<comment type="catalytic activity">
    <reaction evidence="1">
        <text>tRNA(Ile) + L-isoleucine + ATP = L-isoleucyl-tRNA(Ile) + AMP + diphosphate</text>
        <dbReference type="Rhea" id="RHEA:11060"/>
        <dbReference type="Rhea" id="RHEA-COMP:9666"/>
        <dbReference type="Rhea" id="RHEA-COMP:9695"/>
        <dbReference type="ChEBI" id="CHEBI:30616"/>
        <dbReference type="ChEBI" id="CHEBI:33019"/>
        <dbReference type="ChEBI" id="CHEBI:58045"/>
        <dbReference type="ChEBI" id="CHEBI:78442"/>
        <dbReference type="ChEBI" id="CHEBI:78528"/>
        <dbReference type="ChEBI" id="CHEBI:456215"/>
        <dbReference type="EC" id="6.1.1.5"/>
    </reaction>
</comment>
<comment type="cofactor">
    <cofactor evidence="1">
        <name>Zn(2+)</name>
        <dbReference type="ChEBI" id="CHEBI:29105"/>
    </cofactor>
</comment>
<comment type="subunit">
    <text evidence="1">Monomer.</text>
</comment>
<comment type="subcellular location">
    <subcellularLocation>
        <location evidence="1">Cytoplasm</location>
    </subcellularLocation>
</comment>
<comment type="domain">
    <text evidence="1">IleRS has two distinct active sites: one for aminoacylation and one for editing. The misactivated valine is translocated from the active site to the editing site, which sterically excludes the correctly activated isoleucine. The single editing site contains two valyl binding pockets, one specific for each substrate (Val-AMP or Val-tRNA(Ile)).</text>
</comment>
<comment type="similarity">
    <text evidence="1">Belongs to the class-I aminoacyl-tRNA synthetase family. IleS type 2 subfamily.</text>
</comment>
<gene>
    <name evidence="1" type="primary">ileS</name>
    <name type="ordered locus">BRE_844</name>
</gene>
<feature type="chain" id="PRO_1000216251" description="Isoleucine--tRNA ligase">
    <location>
        <begin position="1"/>
        <end position="1044"/>
    </location>
</feature>
<feature type="short sequence motif" description="'HIGH' region">
    <location>
        <begin position="48"/>
        <end position="58"/>
    </location>
</feature>
<feature type="short sequence motif" description="'KMSKS' region">
    <location>
        <begin position="594"/>
        <end position="598"/>
    </location>
</feature>
<feature type="binding site" evidence="1">
    <location>
        <position position="597"/>
    </location>
    <ligand>
        <name>ATP</name>
        <dbReference type="ChEBI" id="CHEBI:30616"/>
    </ligand>
</feature>
<organism>
    <name type="scientific">Borrelia recurrentis (strain A1)</name>
    <dbReference type="NCBI Taxonomy" id="412418"/>
    <lineage>
        <taxon>Bacteria</taxon>
        <taxon>Pseudomonadati</taxon>
        <taxon>Spirochaetota</taxon>
        <taxon>Spirochaetia</taxon>
        <taxon>Spirochaetales</taxon>
        <taxon>Borreliaceae</taxon>
        <taxon>Borrelia</taxon>
    </lineage>
</organism>
<dbReference type="EC" id="6.1.1.5" evidence="1"/>
<dbReference type="EMBL" id="CP000993">
    <property type="protein sequence ID" value="ACH95054.1"/>
    <property type="molecule type" value="Genomic_DNA"/>
</dbReference>
<dbReference type="RefSeq" id="WP_012539206.1">
    <property type="nucleotide sequence ID" value="NC_011244.1"/>
</dbReference>
<dbReference type="SMR" id="B5RQH0"/>
<dbReference type="KEGG" id="bre:BRE_844"/>
<dbReference type="HOGENOM" id="CLU_001493_1_1_12"/>
<dbReference type="Proteomes" id="UP000000612">
    <property type="component" value="Chromosome"/>
</dbReference>
<dbReference type="GO" id="GO:0005737">
    <property type="term" value="C:cytoplasm"/>
    <property type="evidence" value="ECO:0007669"/>
    <property type="project" value="UniProtKB-SubCell"/>
</dbReference>
<dbReference type="GO" id="GO:0002161">
    <property type="term" value="F:aminoacyl-tRNA deacylase activity"/>
    <property type="evidence" value="ECO:0007669"/>
    <property type="project" value="InterPro"/>
</dbReference>
<dbReference type="GO" id="GO:0005524">
    <property type="term" value="F:ATP binding"/>
    <property type="evidence" value="ECO:0007669"/>
    <property type="project" value="UniProtKB-UniRule"/>
</dbReference>
<dbReference type="GO" id="GO:0004822">
    <property type="term" value="F:isoleucine-tRNA ligase activity"/>
    <property type="evidence" value="ECO:0007669"/>
    <property type="project" value="UniProtKB-UniRule"/>
</dbReference>
<dbReference type="GO" id="GO:0000049">
    <property type="term" value="F:tRNA binding"/>
    <property type="evidence" value="ECO:0007669"/>
    <property type="project" value="InterPro"/>
</dbReference>
<dbReference type="GO" id="GO:0008270">
    <property type="term" value="F:zinc ion binding"/>
    <property type="evidence" value="ECO:0007669"/>
    <property type="project" value="UniProtKB-UniRule"/>
</dbReference>
<dbReference type="GO" id="GO:0006428">
    <property type="term" value="P:isoleucyl-tRNA aminoacylation"/>
    <property type="evidence" value="ECO:0007669"/>
    <property type="project" value="UniProtKB-UniRule"/>
</dbReference>
<dbReference type="CDD" id="cd07961">
    <property type="entry name" value="Anticodon_Ia_Ile_ABEc"/>
    <property type="match status" value="1"/>
</dbReference>
<dbReference type="CDD" id="cd00818">
    <property type="entry name" value="IleRS_core"/>
    <property type="match status" value="1"/>
</dbReference>
<dbReference type="FunFam" id="3.40.50.620:FF:000063">
    <property type="entry name" value="Isoleucine--tRNA ligase"/>
    <property type="match status" value="1"/>
</dbReference>
<dbReference type="FunFam" id="3.40.50.620:FF:000133">
    <property type="entry name" value="Isoleucyl-tRNA synthetase, cytoplasmic"/>
    <property type="match status" value="1"/>
</dbReference>
<dbReference type="Gene3D" id="3.40.50.620">
    <property type="entry name" value="HUPs"/>
    <property type="match status" value="2"/>
</dbReference>
<dbReference type="Gene3D" id="1.10.730.10">
    <property type="entry name" value="Isoleucyl-tRNA Synthetase, Domain 1"/>
    <property type="match status" value="1"/>
</dbReference>
<dbReference type="HAMAP" id="MF_02003">
    <property type="entry name" value="Ile_tRNA_synth_type2"/>
    <property type="match status" value="1"/>
</dbReference>
<dbReference type="InterPro" id="IPR002300">
    <property type="entry name" value="aa-tRNA-synth_Ia"/>
</dbReference>
<dbReference type="InterPro" id="IPR033709">
    <property type="entry name" value="Anticodon_Ile_ABEc"/>
</dbReference>
<dbReference type="InterPro" id="IPR002301">
    <property type="entry name" value="Ile-tRNA-ligase"/>
</dbReference>
<dbReference type="InterPro" id="IPR023586">
    <property type="entry name" value="Ile-tRNA-ligase_type2"/>
</dbReference>
<dbReference type="InterPro" id="IPR013155">
    <property type="entry name" value="M/V/L/I-tRNA-synth_anticd-bd"/>
</dbReference>
<dbReference type="InterPro" id="IPR014729">
    <property type="entry name" value="Rossmann-like_a/b/a_fold"/>
</dbReference>
<dbReference type="InterPro" id="IPR009080">
    <property type="entry name" value="tRNAsynth_Ia_anticodon-bd"/>
</dbReference>
<dbReference type="InterPro" id="IPR009008">
    <property type="entry name" value="Val/Leu/Ile-tRNA-synth_edit"/>
</dbReference>
<dbReference type="NCBIfam" id="TIGR00392">
    <property type="entry name" value="ileS"/>
    <property type="match status" value="1"/>
</dbReference>
<dbReference type="PANTHER" id="PTHR42780:SF1">
    <property type="entry name" value="ISOLEUCINE--TRNA LIGASE, CYTOPLASMIC"/>
    <property type="match status" value="1"/>
</dbReference>
<dbReference type="PANTHER" id="PTHR42780">
    <property type="entry name" value="SOLEUCYL-TRNA SYNTHETASE"/>
    <property type="match status" value="1"/>
</dbReference>
<dbReference type="Pfam" id="PF08264">
    <property type="entry name" value="Anticodon_1"/>
    <property type="match status" value="1"/>
</dbReference>
<dbReference type="Pfam" id="PF19302">
    <property type="entry name" value="DUF5915"/>
    <property type="match status" value="1"/>
</dbReference>
<dbReference type="Pfam" id="PF00133">
    <property type="entry name" value="tRNA-synt_1"/>
    <property type="match status" value="1"/>
</dbReference>
<dbReference type="PRINTS" id="PR00984">
    <property type="entry name" value="TRNASYNTHILE"/>
</dbReference>
<dbReference type="SUPFAM" id="SSF47323">
    <property type="entry name" value="Anticodon-binding domain of a subclass of class I aminoacyl-tRNA synthetases"/>
    <property type="match status" value="1"/>
</dbReference>
<dbReference type="SUPFAM" id="SSF52374">
    <property type="entry name" value="Nucleotidylyl transferase"/>
    <property type="match status" value="1"/>
</dbReference>
<dbReference type="SUPFAM" id="SSF50677">
    <property type="entry name" value="ValRS/IleRS/LeuRS editing domain"/>
    <property type="match status" value="1"/>
</dbReference>
<proteinExistence type="inferred from homology"/>